<name>RR11_CERDE</name>
<comment type="subunit">
    <text evidence="1">Part of the 30S ribosomal subunit.</text>
</comment>
<comment type="subcellular location">
    <subcellularLocation>
        <location>Plastid</location>
        <location>Chloroplast</location>
    </subcellularLocation>
</comment>
<comment type="similarity">
    <text evidence="1">Belongs to the universal ribosomal protein uS11 family.</text>
</comment>
<evidence type="ECO:0000255" key="1">
    <source>
        <dbReference type="HAMAP-Rule" id="MF_01310"/>
    </source>
</evidence>
<evidence type="ECO:0000256" key="2">
    <source>
        <dbReference type="SAM" id="MobiDB-lite"/>
    </source>
</evidence>
<evidence type="ECO:0000305" key="3"/>
<gene>
    <name evidence="1" type="primary">rps11</name>
</gene>
<dbReference type="EMBL" id="EF614270">
    <property type="protein sequence ID" value="ABQ81484.1"/>
    <property type="molecule type" value="Genomic_DNA"/>
</dbReference>
<dbReference type="RefSeq" id="YP_001542480.1">
    <property type="nucleotide sequence ID" value="NC_009962.1"/>
</dbReference>
<dbReference type="SMR" id="A8SED6"/>
<dbReference type="GeneID" id="5729421"/>
<dbReference type="GO" id="GO:0009507">
    <property type="term" value="C:chloroplast"/>
    <property type="evidence" value="ECO:0007669"/>
    <property type="project" value="UniProtKB-SubCell"/>
</dbReference>
<dbReference type="GO" id="GO:1990904">
    <property type="term" value="C:ribonucleoprotein complex"/>
    <property type="evidence" value="ECO:0007669"/>
    <property type="project" value="UniProtKB-KW"/>
</dbReference>
<dbReference type="GO" id="GO:0005840">
    <property type="term" value="C:ribosome"/>
    <property type="evidence" value="ECO:0007669"/>
    <property type="project" value="UniProtKB-KW"/>
</dbReference>
<dbReference type="GO" id="GO:0019843">
    <property type="term" value="F:rRNA binding"/>
    <property type="evidence" value="ECO:0007669"/>
    <property type="project" value="UniProtKB-UniRule"/>
</dbReference>
<dbReference type="GO" id="GO:0003735">
    <property type="term" value="F:structural constituent of ribosome"/>
    <property type="evidence" value="ECO:0007669"/>
    <property type="project" value="InterPro"/>
</dbReference>
<dbReference type="GO" id="GO:0006412">
    <property type="term" value="P:translation"/>
    <property type="evidence" value="ECO:0007669"/>
    <property type="project" value="UniProtKB-UniRule"/>
</dbReference>
<dbReference type="FunFam" id="3.30.420.80:FF:000003">
    <property type="entry name" value="30S ribosomal protein S11, chloroplastic"/>
    <property type="match status" value="1"/>
</dbReference>
<dbReference type="Gene3D" id="3.30.420.80">
    <property type="entry name" value="Ribosomal protein S11"/>
    <property type="match status" value="1"/>
</dbReference>
<dbReference type="HAMAP" id="MF_01310">
    <property type="entry name" value="Ribosomal_uS11"/>
    <property type="match status" value="1"/>
</dbReference>
<dbReference type="InterPro" id="IPR001971">
    <property type="entry name" value="Ribosomal_uS11"/>
</dbReference>
<dbReference type="InterPro" id="IPR019981">
    <property type="entry name" value="Ribosomal_uS11_bac-type"/>
</dbReference>
<dbReference type="InterPro" id="IPR018102">
    <property type="entry name" value="Ribosomal_uS11_CS"/>
</dbReference>
<dbReference type="InterPro" id="IPR036967">
    <property type="entry name" value="Ribosomal_uS11_sf"/>
</dbReference>
<dbReference type="NCBIfam" id="NF003698">
    <property type="entry name" value="PRK05309.1"/>
    <property type="match status" value="1"/>
</dbReference>
<dbReference type="NCBIfam" id="TIGR03632">
    <property type="entry name" value="uS11_bact"/>
    <property type="match status" value="1"/>
</dbReference>
<dbReference type="PANTHER" id="PTHR11759">
    <property type="entry name" value="40S RIBOSOMAL PROTEIN S14/30S RIBOSOMAL PROTEIN S11"/>
    <property type="match status" value="1"/>
</dbReference>
<dbReference type="Pfam" id="PF00411">
    <property type="entry name" value="Ribosomal_S11"/>
    <property type="match status" value="1"/>
</dbReference>
<dbReference type="PIRSF" id="PIRSF002131">
    <property type="entry name" value="Ribosomal_S11"/>
    <property type="match status" value="1"/>
</dbReference>
<dbReference type="SUPFAM" id="SSF53137">
    <property type="entry name" value="Translational machinery components"/>
    <property type="match status" value="1"/>
</dbReference>
<dbReference type="PROSITE" id="PS00054">
    <property type="entry name" value="RIBOSOMAL_S11"/>
    <property type="match status" value="1"/>
</dbReference>
<proteinExistence type="inferred from homology"/>
<protein>
    <recommendedName>
        <fullName evidence="1">Small ribosomal subunit protein uS11c</fullName>
    </recommendedName>
    <alternativeName>
        <fullName evidence="3">30S ribosomal protein S11, chloroplastic</fullName>
    </alternativeName>
</protein>
<geneLocation type="chloroplast"/>
<reference key="1">
    <citation type="journal article" date="2007" name="Proc. Natl. Acad. Sci. U.S.A.">
        <title>Using plastid genome-scale data to resolve enigmatic relationships among basal angiosperms.</title>
        <authorList>
            <person name="Moore M.J."/>
            <person name="Bell C.D."/>
            <person name="Soltis P.S."/>
            <person name="Soltis D.E."/>
        </authorList>
    </citation>
    <scope>NUCLEOTIDE SEQUENCE [LARGE SCALE GENOMIC DNA]</scope>
</reference>
<keyword id="KW-0150">Chloroplast</keyword>
<keyword id="KW-0934">Plastid</keyword>
<keyword id="KW-0687">Ribonucleoprotein</keyword>
<keyword id="KW-0689">Ribosomal protein</keyword>
<keyword id="KW-0694">RNA-binding</keyword>
<keyword id="KW-0699">rRNA-binding</keyword>
<sequence length="138" mass="14973">MTKAIQKIGSRRNGRIASRKNGRRIPKGVIHVQASFNNTIVTVTDVRGQVVSWSSAGTCGFRGTRRGTPFAAQTAAANAIRTVVDQGMQRAEVMIKGPGLGRDAALRAIRRSGILLSFVRDVTPMPHNGCRPPKKRRV</sequence>
<feature type="chain" id="PRO_0000323357" description="Small ribosomal subunit protein uS11c">
    <location>
        <begin position="1"/>
        <end position="138"/>
    </location>
</feature>
<feature type="region of interest" description="Disordered" evidence="2">
    <location>
        <begin position="1"/>
        <end position="21"/>
    </location>
</feature>
<feature type="compositionally biased region" description="Basic residues" evidence="2">
    <location>
        <begin position="9"/>
        <end position="21"/>
    </location>
</feature>
<accession>A8SED6</accession>
<organism>
    <name type="scientific">Ceratophyllum demersum</name>
    <name type="common">Rigid hornwort</name>
    <name type="synonym">Coontail</name>
    <dbReference type="NCBI Taxonomy" id="4428"/>
    <lineage>
        <taxon>Eukaryota</taxon>
        <taxon>Viridiplantae</taxon>
        <taxon>Streptophyta</taxon>
        <taxon>Embryophyta</taxon>
        <taxon>Tracheophyta</taxon>
        <taxon>Spermatophyta</taxon>
        <taxon>Magnoliopsida</taxon>
        <taxon>Ceratophyllales</taxon>
        <taxon>Ceratophyllaceae</taxon>
        <taxon>Ceratophyllum</taxon>
    </lineage>
</organism>